<sequence length="317" mass="34831">MPMQGAQRRLLGSLNSIPTATPNLGLAANHTGAPCLEVSIPDWLFLSLGLVSLVQNVLVVAAIAKNRNLHSPMYCFICCLALSDLLVSGSNMLETAVILMLEAGALATRASVVQQLQNTIDVLTCSSMLCSLCFLGAIALDRYVSIFYALRYHSIVTLPRARRAIAATWVASVLSSTLFIAYCDHAAVLLCLVVFFLAMLVLMAVLYVHMLARACQHAQGITRLHKRQLPAHQGFGLRGAATLTILLGIFFLCWGPFFLHLMLVVLCPQHLTCSCIFKNFKVFLTLIICNTIIDPLIYAFRSQELCRTLKEVLLCSW</sequence>
<gene>
    <name type="primary">MC1R</name>
</gene>
<name>MSHR_ALOSE</name>
<reference key="1">
    <citation type="journal article" date="2003" name="Am. J. Phys. Anthropol.">
        <title>Evolution of a pigmentation gene, the melanocortin-1 receptor, in primates.</title>
        <authorList>
            <person name="Mundy N.I."/>
            <person name="Kelly J."/>
        </authorList>
    </citation>
    <scope>NUCLEOTIDE SEQUENCE [GENOMIC DNA]</scope>
    <source>
        <strain>Isolate 3</strain>
        <strain>Isolate 471</strain>
    </source>
</reference>
<dbReference type="EMBL" id="AY205131">
    <property type="protein sequence ID" value="AAP31005.1"/>
    <property type="molecule type" value="Genomic_DNA"/>
</dbReference>
<dbReference type="EMBL" id="AY205132">
    <property type="protein sequence ID" value="AAP31006.1"/>
    <property type="molecule type" value="Genomic_DNA"/>
</dbReference>
<dbReference type="SMR" id="Q864G6"/>
<dbReference type="GlyCosmos" id="Q864G6">
    <property type="glycosylation" value="1 site, No reported glycans"/>
</dbReference>
<dbReference type="GO" id="GO:0005886">
    <property type="term" value="C:plasma membrane"/>
    <property type="evidence" value="ECO:0000250"/>
    <property type="project" value="UniProtKB"/>
</dbReference>
<dbReference type="GO" id="GO:0004980">
    <property type="term" value="F:melanocyte-stimulating hormone receptor activity"/>
    <property type="evidence" value="ECO:0007669"/>
    <property type="project" value="InterPro"/>
</dbReference>
<dbReference type="GO" id="GO:0007189">
    <property type="term" value="P:adenylate cyclase-activating G protein-coupled receptor signaling pathway"/>
    <property type="evidence" value="ECO:0007669"/>
    <property type="project" value="UniProtKB-ARBA"/>
</dbReference>
<dbReference type="FunFam" id="1.20.1070.10:FF:000211">
    <property type="entry name" value="Melanocyte-stimulating hormone receptor"/>
    <property type="match status" value="1"/>
</dbReference>
<dbReference type="Gene3D" id="1.20.1070.10">
    <property type="entry name" value="Rhodopsin 7-helix transmembrane proteins"/>
    <property type="match status" value="1"/>
</dbReference>
<dbReference type="InterPro" id="IPR000276">
    <property type="entry name" value="GPCR_Rhodpsn"/>
</dbReference>
<dbReference type="InterPro" id="IPR017452">
    <property type="entry name" value="GPCR_Rhodpsn_7TM"/>
</dbReference>
<dbReference type="InterPro" id="IPR001671">
    <property type="entry name" value="Melcrt_ACTH_rcpt"/>
</dbReference>
<dbReference type="InterPro" id="IPR000761">
    <property type="entry name" value="MSH_rcpt"/>
</dbReference>
<dbReference type="PANTHER" id="PTHR22750">
    <property type="entry name" value="G-PROTEIN COUPLED RECEPTOR"/>
    <property type="match status" value="1"/>
</dbReference>
<dbReference type="Pfam" id="PF00001">
    <property type="entry name" value="7tm_1"/>
    <property type="match status" value="2"/>
</dbReference>
<dbReference type="PRINTS" id="PR00237">
    <property type="entry name" value="GPCRRHODOPSN"/>
</dbReference>
<dbReference type="PRINTS" id="PR00534">
    <property type="entry name" value="MCRFAMILY"/>
</dbReference>
<dbReference type="PRINTS" id="PR00536">
    <property type="entry name" value="MELNOCYTESHR"/>
</dbReference>
<dbReference type="SMART" id="SM01381">
    <property type="entry name" value="7TM_GPCR_Srsx"/>
    <property type="match status" value="1"/>
</dbReference>
<dbReference type="SUPFAM" id="SSF81321">
    <property type="entry name" value="Family A G protein-coupled receptor-like"/>
    <property type="match status" value="1"/>
</dbReference>
<dbReference type="PROSITE" id="PS00237">
    <property type="entry name" value="G_PROTEIN_RECEP_F1_1"/>
    <property type="match status" value="1"/>
</dbReference>
<dbReference type="PROSITE" id="PS50262">
    <property type="entry name" value="G_PROTEIN_RECEP_F1_2"/>
    <property type="match status" value="1"/>
</dbReference>
<accession>Q864G6</accession>
<accession>Q864G5</accession>
<proteinExistence type="inferred from homology"/>
<evidence type="ECO:0000250" key="1">
    <source>
        <dbReference type="UniProtKB" id="Q01726"/>
    </source>
</evidence>
<evidence type="ECO:0000255" key="2"/>
<evidence type="ECO:0000255" key="3">
    <source>
        <dbReference type="PROSITE-ProRule" id="PRU00521"/>
    </source>
</evidence>
<organism>
    <name type="scientific">Alouatta seniculus</name>
    <name type="common">Red howler monkey</name>
    <dbReference type="NCBI Taxonomy" id="9503"/>
    <lineage>
        <taxon>Eukaryota</taxon>
        <taxon>Metazoa</taxon>
        <taxon>Chordata</taxon>
        <taxon>Craniata</taxon>
        <taxon>Vertebrata</taxon>
        <taxon>Euteleostomi</taxon>
        <taxon>Mammalia</taxon>
        <taxon>Eutheria</taxon>
        <taxon>Euarchontoglires</taxon>
        <taxon>Primates</taxon>
        <taxon>Haplorrhini</taxon>
        <taxon>Platyrrhini</taxon>
        <taxon>Atelidae</taxon>
        <taxon>Alouattinae</taxon>
        <taxon>Alouatta</taxon>
    </lineage>
</organism>
<keyword id="KW-1003">Cell membrane</keyword>
<keyword id="KW-0297">G-protein coupled receptor</keyword>
<keyword id="KW-0325">Glycoprotein</keyword>
<keyword id="KW-0449">Lipoprotein</keyword>
<keyword id="KW-0472">Membrane</keyword>
<keyword id="KW-0564">Palmitate</keyword>
<keyword id="KW-0675">Receptor</keyword>
<keyword id="KW-0807">Transducer</keyword>
<keyword id="KW-0812">Transmembrane</keyword>
<keyword id="KW-1133">Transmembrane helix</keyword>
<comment type="function">
    <text evidence="1">Receptor for MSH (alpha, beta and gamma) and ACTH. The activity of this receptor is mediated by G proteins which activate adenylate cyclase. Mediates melanogenesis, the production of eumelanin (black/brown) and phaeomelanin (red/yellow), via regulation of cAMP signaling in melanocytes.</text>
</comment>
<comment type="subunit">
    <text evidence="1">Interacts with MGRN1, but does not undergo MGRN1-mediated ubiquitination; this interaction competes with GNAS-binding and thus inhibits agonist-induced cAMP production. Interacts with OPN3; the interaction results in a decrease in MC1R-mediated cAMP signaling and ultimately a decrease in melanin production in melanocytes.</text>
</comment>
<comment type="subcellular location">
    <subcellularLocation>
        <location evidence="1">Cell membrane</location>
        <topology evidence="2">Multi-pass membrane protein</topology>
    </subcellularLocation>
</comment>
<comment type="similarity">
    <text evidence="3">Belongs to the G-protein coupled receptor 1 family.</text>
</comment>
<protein>
    <recommendedName>
        <fullName>Melanocyte-stimulating hormone receptor</fullName>
        <shortName>MSH-R</shortName>
    </recommendedName>
    <alternativeName>
        <fullName>Melanocortin receptor 1</fullName>
        <shortName>MC1-R</shortName>
    </alternativeName>
</protein>
<feature type="chain" id="PRO_0000069791" description="Melanocyte-stimulating hormone receptor">
    <location>
        <begin position="1"/>
        <end position="317"/>
    </location>
</feature>
<feature type="topological domain" description="Extracellular" evidence="2">
    <location>
        <begin position="1"/>
        <end position="37"/>
    </location>
</feature>
<feature type="transmembrane region" description="Helical; Name=1" evidence="2">
    <location>
        <begin position="38"/>
        <end position="63"/>
    </location>
</feature>
<feature type="topological domain" description="Cytoplasmic" evidence="2">
    <location>
        <begin position="64"/>
        <end position="72"/>
    </location>
</feature>
<feature type="transmembrane region" description="Helical; Name=2" evidence="2">
    <location>
        <begin position="73"/>
        <end position="93"/>
    </location>
</feature>
<feature type="topological domain" description="Extracellular" evidence="2">
    <location>
        <begin position="94"/>
        <end position="118"/>
    </location>
</feature>
<feature type="transmembrane region" description="Helical; Name=3" evidence="2">
    <location>
        <begin position="119"/>
        <end position="140"/>
    </location>
</feature>
<feature type="topological domain" description="Cytoplasmic" evidence="2">
    <location>
        <begin position="141"/>
        <end position="163"/>
    </location>
</feature>
<feature type="transmembrane region" description="Helical; Name=4" evidence="2">
    <location>
        <begin position="164"/>
        <end position="183"/>
    </location>
</feature>
<feature type="topological domain" description="Extracellular" evidence="2">
    <location>
        <begin position="184"/>
        <end position="191"/>
    </location>
</feature>
<feature type="transmembrane region" description="Helical; Name=5" evidence="2">
    <location>
        <begin position="192"/>
        <end position="211"/>
    </location>
</feature>
<feature type="topological domain" description="Cytoplasmic" evidence="2">
    <location>
        <begin position="212"/>
        <end position="240"/>
    </location>
</feature>
<feature type="transmembrane region" description="Helical; Name=6" evidence="2">
    <location>
        <begin position="241"/>
        <end position="266"/>
    </location>
</feature>
<feature type="topological domain" description="Extracellular" evidence="2">
    <location>
        <begin position="267"/>
        <end position="279"/>
    </location>
</feature>
<feature type="transmembrane region" description="Helical; Name=7" evidence="2">
    <location>
        <begin position="280"/>
        <end position="300"/>
    </location>
</feature>
<feature type="topological domain" description="Cytoplasmic" evidence="2">
    <location>
        <begin position="301"/>
        <end position="317"/>
    </location>
</feature>
<feature type="lipid moiety-binding region" description="S-palmitoyl cysteine" evidence="2">
    <location>
        <position position="315"/>
    </location>
</feature>
<feature type="glycosylation site" description="N-linked (GlcNAc...) asparagine" evidence="2">
    <location>
        <position position="29"/>
    </location>
</feature>
<feature type="sequence variant" description="In strain: Isolate 3.">
    <original>I</original>
    <variation>T</variation>
    <location>
        <position position="17"/>
    </location>
</feature>
<feature type="sequence variant" description="In strain: Isolate 3.">
    <original>W</original>
    <variation>G</variation>
    <location>
        <position position="43"/>
    </location>
</feature>
<feature type="sequence variant" description="In strain: Isolate 3.">
    <original>Q</original>
    <variation>E</variation>
    <location>
        <position position="55"/>
    </location>
</feature>
<feature type="sequence variant" description="In strain: Isolate 3.">
    <original>M</original>
    <variation>L</variation>
    <location>
        <position position="100"/>
    </location>
</feature>
<feature type="sequence variant" description="In strain: Isolate 3.">
    <original>L</original>
    <variation>V</variation>
    <location>
        <position position="140"/>
    </location>
</feature>
<feature type="sequence variant" description="In strain: Isolate 3.">
    <original>H</original>
    <variation>R</variation>
    <location>
        <position position="153"/>
    </location>
</feature>
<feature type="sequence variant" description="In strain: Isolate 3.">
    <original>I</original>
    <variation>V</variation>
    <location>
        <position position="165"/>
    </location>
</feature>
<feature type="sequence variant" description="In strain: Isolate 3.">
    <original>M</original>
    <variation>V</variation>
    <location>
        <position position="199"/>
    </location>
</feature>